<reference key="1">
    <citation type="journal article" date="2004" name="Nat. Biotechnol.">
        <title>Complete genome sequence of the metabolically versatile photosynthetic bacterium Rhodopseudomonas palustris.</title>
        <authorList>
            <person name="Larimer F.W."/>
            <person name="Chain P."/>
            <person name="Hauser L."/>
            <person name="Lamerdin J.E."/>
            <person name="Malfatti S."/>
            <person name="Do L."/>
            <person name="Land M.L."/>
            <person name="Pelletier D.A."/>
            <person name="Beatty J.T."/>
            <person name="Lang A.S."/>
            <person name="Tabita F.R."/>
            <person name="Gibson J.L."/>
            <person name="Hanson T.E."/>
            <person name="Bobst C."/>
            <person name="Torres y Torres J.L."/>
            <person name="Peres C."/>
            <person name="Harrison F.H."/>
            <person name="Gibson J."/>
            <person name="Harwood C.S."/>
        </authorList>
    </citation>
    <scope>NUCLEOTIDE SEQUENCE [LARGE SCALE GENOMIC DNA]</scope>
    <source>
        <strain>ATCC BAA-98 / CGA009</strain>
    </source>
</reference>
<protein>
    <recommendedName>
        <fullName evidence="1">Xanthine-guanine phosphoribosyltransferase</fullName>
        <shortName evidence="1">XGPRT</shortName>
        <ecNumber evidence="1">2.4.2.-</ecNumber>
        <ecNumber evidence="1">2.4.2.22</ecNumber>
    </recommendedName>
    <alternativeName>
        <fullName evidence="1">Xanthine phosphoribosyltransferase</fullName>
    </alternativeName>
</protein>
<gene>
    <name evidence="1" type="primary">gpt</name>
    <name type="ordered locus">RPA2179</name>
</gene>
<evidence type="ECO:0000255" key="1">
    <source>
        <dbReference type="HAMAP-Rule" id="MF_01903"/>
    </source>
</evidence>
<evidence type="ECO:0000305" key="2"/>
<comment type="function">
    <text evidence="1">Purine salvage pathway enzyme that catalyzes the transfer of the ribosyl-5-phosphate group from 5-phospho-alpha-D-ribose 1-diphosphate (PRPP) to the N9 position of the 6-oxopurines guanine and xanthine to form the corresponding ribonucleotides GMP (guanosine 5'-monophosphate) and XMP (xanthosine 5'-monophosphate), with the release of PPi. To a lesser extent, also acts on hypoxanthine.</text>
</comment>
<comment type="catalytic activity">
    <reaction evidence="1">
        <text>GMP + diphosphate = guanine + 5-phospho-alpha-D-ribose 1-diphosphate</text>
        <dbReference type="Rhea" id="RHEA:25424"/>
        <dbReference type="ChEBI" id="CHEBI:16235"/>
        <dbReference type="ChEBI" id="CHEBI:33019"/>
        <dbReference type="ChEBI" id="CHEBI:58017"/>
        <dbReference type="ChEBI" id="CHEBI:58115"/>
    </reaction>
    <physiologicalReaction direction="right-to-left" evidence="1">
        <dbReference type="Rhea" id="RHEA:25426"/>
    </physiologicalReaction>
</comment>
<comment type="catalytic activity">
    <reaction evidence="1">
        <text>XMP + diphosphate = xanthine + 5-phospho-alpha-D-ribose 1-diphosphate</text>
        <dbReference type="Rhea" id="RHEA:10800"/>
        <dbReference type="ChEBI" id="CHEBI:17712"/>
        <dbReference type="ChEBI" id="CHEBI:33019"/>
        <dbReference type="ChEBI" id="CHEBI:57464"/>
        <dbReference type="ChEBI" id="CHEBI:58017"/>
        <dbReference type="EC" id="2.4.2.22"/>
    </reaction>
    <physiologicalReaction direction="right-to-left" evidence="1">
        <dbReference type="Rhea" id="RHEA:10802"/>
    </physiologicalReaction>
</comment>
<comment type="catalytic activity">
    <reaction evidence="1">
        <text>IMP + diphosphate = hypoxanthine + 5-phospho-alpha-D-ribose 1-diphosphate</text>
        <dbReference type="Rhea" id="RHEA:17973"/>
        <dbReference type="ChEBI" id="CHEBI:17368"/>
        <dbReference type="ChEBI" id="CHEBI:33019"/>
        <dbReference type="ChEBI" id="CHEBI:58017"/>
        <dbReference type="ChEBI" id="CHEBI:58053"/>
    </reaction>
    <physiologicalReaction direction="right-to-left" evidence="1">
        <dbReference type="Rhea" id="RHEA:17975"/>
    </physiologicalReaction>
</comment>
<comment type="cofactor">
    <cofactor evidence="1">
        <name>Mg(2+)</name>
        <dbReference type="ChEBI" id="CHEBI:18420"/>
    </cofactor>
</comment>
<comment type="pathway">
    <text evidence="1">Purine metabolism; GMP biosynthesis via salvage pathway; GMP from guanine: step 1/1.</text>
</comment>
<comment type="pathway">
    <text evidence="1">Purine metabolism; XMP biosynthesis via salvage pathway; XMP from xanthine: step 1/1.</text>
</comment>
<comment type="subunit">
    <text evidence="1">Homotetramer.</text>
</comment>
<comment type="subcellular location">
    <subcellularLocation>
        <location evidence="1">Cell inner membrane</location>
        <topology evidence="1">Peripheral membrane protein</topology>
    </subcellularLocation>
</comment>
<comment type="similarity">
    <text evidence="1">Belongs to the purine/pyrimidine phosphoribosyltransferase family. XGPT subfamily.</text>
</comment>
<comment type="sequence caution" evidence="2">
    <conflict type="erroneous initiation">
        <sequence resource="EMBL-CDS" id="CAE27620"/>
    </conflict>
</comment>
<keyword id="KW-0997">Cell inner membrane</keyword>
<keyword id="KW-1003">Cell membrane</keyword>
<keyword id="KW-0328">Glycosyltransferase</keyword>
<keyword id="KW-0460">Magnesium</keyword>
<keyword id="KW-0472">Membrane</keyword>
<keyword id="KW-0479">Metal-binding</keyword>
<keyword id="KW-0660">Purine salvage</keyword>
<keyword id="KW-0808">Transferase</keyword>
<accession>Q6N7S7</accession>
<name>XGPT_RHOPA</name>
<dbReference type="EC" id="2.4.2.-" evidence="1"/>
<dbReference type="EC" id="2.4.2.22" evidence="1"/>
<dbReference type="EMBL" id="BX572600">
    <property type="protein sequence ID" value="CAE27620.1"/>
    <property type="status" value="ALT_INIT"/>
    <property type="molecule type" value="Genomic_DNA"/>
</dbReference>
<dbReference type="RefSeq" id="WP_012495731.1">
    <property type="nucleotide sequence ID" value="NZ_CP116810.1"/>
</dbReference>
<dbReference type="SMR" id="Q6N7S7"/>
<dbReference type="STRING" id="258594.RPA2179"/>
<dbReference type="GeneID" id="66893230"/>
<dbReference type="eggNOG" id="COG2236">
    <property type="taxonomic scope" value="Bacteria"/>
</dbReference>
<dbReference type="HOGENOM" id="CLU_080904_3_0_5"/>
<dbReference type="PhylomeDB" id="Q6N7S7"/>
<dbReference type="UniPathway" id="UPA00602">
    <property type="reaction ID" value="UER00658"/>
</dbReference>
<dbReference type="UniPathway" id="UPA00909">
    <property type="reaction ID" value="UER00887"/>
</dbReference>
<dbReference type="GO" id="GO:0005886">
    <property type="term" value="C:plasma membrane"/>
    <property type="evidence" value="ECO:0007669"/>
    <property type="project" value="UniProtKB-SubCell"/>
</dbReference>
<dbReference type="GO" id="GO:0052657">
    <property type="term" value="F:guanine phosphoribosyltransferase activity"/>
    <property type="evidence" value="ECO:0007669"/>
    <property type="project" value="RHEA"/>
</dbReference>
<dbReference type="GO" id="GO:0004422">
    <property type="term" value="F:hypoxanthine phosphoribosyltransferase activity"/>
    <property type="evidence" value="ECO:0007669"/>
    <property type="project" value="RHEA"/>
</dbReference>
<dbReference type="GO" id="GO:0000287">
    <property type="term" value="F:magnesium ion binding"/>
    <property type="evidence" value="ECO:0007669"/>
    <property type="project" value="UniProtKB-UniRule"/>
</dbReference>
<dbReference type="GO" id="GO:0000310">
    <property type="term" value="F:xanthine phosphoribosyltransferase activity"/>
    <property type="evidence" value="ECO:0007669"/>
    <property type="project" value="UniProtKB-UniRule"/>
</dbReference>
<dbReference type="GO" id="GO:0032263">
    <property type="term" value="P:GMP salvage"/>
    <property type="evidence" value="ECO:0007669"/>
    <property type="project" value="UniProtKB-UniRule"/>
</dbReference>
<dbReference type="GO" id="GO:0006166">
    <property type="term" value="P:purine ribonucleoside salvage"/>
    <property type="evidence" value="ECO:0007669"/>
    <property type="project" value="UniProtKB-KW"/>
</dbReference>
<dbReference type="GO" id="GO:0032265">
    <property type="term" value="P:XMP salvage"/>
    <property type="evidence" value="ECO:0007669"/>
    <property type="project" value="UniProtKB-UniRule"/>
</dbReference>
<dbReference type="CDD" id="cd06223">
    <property type="entry name" value="PRTases_typeI"/>
    <property type="match status" value="1"/>
</dbReference>
<dbReference type="Gene3D" id="3.40.50.2020">
    <property type="match status" value="1"/>
</dbReference>
<dbReference type="HAMAP" id="MF_01903">
    <property type="entry name" value="XGPRT"/>
    <property type="match status" value="1"/>
</dbReference>
<dbReference type="InterPro" id="IPR000836">
    <property type="entry name" value="PRibTrfase_dom"/>
</dbReference>
<dbReference type="InterPro" id="IPR029057">
    <property type="entry name" value="PRTase-like"/>
</dbReference>
<dbReference type="InterPro" id="IPR023747">
    <property type="entry name" value="Xanthine_Guanine_PRibTrfase"/>
</dbReference>
<dbReference type="NCBIfam" id="NF006613">
    <property type="entry name" value="PRK09177.1"/>
    <property type="match status" value="1"/>
</dbReference>
<dbReference type="PANTHER" id="PTHR39563">
    <property type="entry name" value="XANTHINE PHOSPHORIBOSYLTRANSFERASE"/>
    <property type="match status" value="1"/>
</dbReference>
<dbReference type="PANTHER" id="PTHR39563:SF1">
    <property type="entry name" value="XANTHINE-GUANINE PHOSPHORIBOSYLTRANSFERASE"/>
    <property type="match status" value="1"/>
</dbReference>
<dbReference type="Pfam" id="PF00156">
    <property type="entry name" value="Pribosyltran"/>
    <property type="match status" value="1"/>
</dbReference>
<dbReference type="SUPFAM" id="SSF53271">
    <property type="entry name" value="PRTase-like"/>
    <property type="match status" value="1"/>
</dbReference>
<dbReference type="PROSITE" id="PS00103">
    <property type="entry name" value="PUR_PYR_PR_TRANSFER"/>
    <property type="match status" value="1"/>
</dbReference>
<proteinExistence type="inferred from homology"/>
<organism>
    <name type="scientific">Rhodopseudomonas palustris (strain ATCC BAA-98 / CGA009)</name>
    <dbReference type="NCBI Taxonomy" id="258594"/>
    <lineage>
        <taxon>Bacteria</taxon>
        <taxon>Pseudomonadati</taxon>
        <taxon>Pseudomonadota</taxon>
        <taxon>Alphaproteobacteria</taxon>
        <taxon>Hyphomicrobiales</taxon>
        <taxon>Nitrobacteraceae</taxon>
        <taxon>Rhodopseudomonas</taxon>
    </lineage>
</organism>
<feature type="chain" id="PRO_0000139682" description="Xanthine-guanine phosphoribosyltransferase">
    <location>
        <begin position="1"/>
        <end position="173"/>
    </location>
</feature>
<feature type="binding site" evidence="1">
    <location>
        <begin position="48"/>
        <end position="49"/>
    </location>
    <ligand>
        <name>5-phospho-alpha-D-ribose 1-diphosphate</name>
        <dbReference type="ChEBI" id="CHEBI:58017"/>
    </ligand>
</feature>
<feature type="binding site" evidence="1">
    <location>
        <begin position="107"/>
        <end position="115"/>
    </location>
    <ligand>
        <name>5-phospho-alpha-D-ribose 1-diphosphate</name>
        <dbReference type="ChEBI" id="CHEBI:58017"/>
    </ligand>
</feature>
<feature type="binding site" evidence="1">
    <location>
        <position position="108"/>
    </location>
    <ligand>
        <name>Mg(2+)</name>
        <dbReference type="ChEBI" id="CHEBI:18420"/>
    </ligand>
</feature>
<feature type="binding site" evidence="1">
    <location>
        <begin position="111"/>
        <end position="115"/>
    </location>
    <ligand>
        <name>GMP</name>
        <dbReference type="ChEBI" id="CHEBI:58115"/>
    </ligand>
</feature>
<feature type="binding site" evidence="1">
    <location>
        <position position="111"/>
    </location>
    <ligand>
        <name>guanine</name>
        <dbReference type="ChEBI" id="CHEBI:16235"/>
    </ligand>
</feature>
<feature type="binding site" evidence="1">
    <location>
        <position position="111"/>
    </location>
    <ligand>
        <name>xanthine</name>
        <dbReference type="ChEBI" id="CHEBI:17712"/>
    </ligand>
</feature>
<feature type="binding site" evidence="1">
    <location>
        <begin position="153"/>
        <end position="154"/>
    </location>
    <ligand>
        <name>GMP</name>
        <dbReference type="ChEBI" id="CHEBI:58115"/>
    </ligand>
</feature>
<feature type="binding site" evidence="1">
    <location>
        <position position="154"/>
    </location>
    <ligand>
        <name>guanine</name>
        <dbReference type="ChEBI" id="CHEBI:16235"/>
    </ligand>
</feature>
<feature type="binding site" evidence="1">
    <location>
        <position position="154"/>
    </location>
    <ligand>
        <name>xanthine</name>
        <dbReference type="ChEBI" id="CHEBI:17712"/>
    </ligand>
</feature>
<sequence length="173" mass="18917">MTQSEPTEQKRAGRPFPVSWDQFHRDCRALSWRLNELGPFHAVIAITRGGLVPAAIVARELGLRVIDTVCIASYEHDKQGELQVLKGVSDQTATLGGGTGKGLLIIDDLVDTGKTGRMVRSMLPDAHFAAVYAKPKGRPLVDTFITEVSQDTWIFFPWDTGLSFQPPLKDGAG</sequence>